<evidence type="ECO:0000255" key="1">
    <source>
        <dbReference type="HAMAP-Rule" id="MF_00120"/>
    </source>
</evidence>
<dbReference type="EC" id="6.3.5.7" evidence="1"/>
<dbReference type="EMBL" id="CP001287">
    <property type="protein sequence ID" value="ACK67466.1"/>
    <property type="molecule type" value="Genomic_DNA"/>
</dbReference>
<dbReference type="RefSeq" id="WP_012596725.1">
    <property type="nucleotide sequence ID" value="NC_011726.1"/>
</dbReference>
<dbReference type="SMR" id="B7K0I2"/>
<dbReference type="STRING" id="41431.PCC8801_3501"/>
<dbReference type="KEGG" id="cyp:PCC8801_3501"/>
<dbReference type="eggNOG" id="COG0154">
    <property type="taxonomic scope" value="Bacteria"/>
</dbReference>
<dbReference type="HOGENOM" id="CLU_009600_0_3_3"/>
<dbReference type="OrthoDB" id="9811471at2"/>
<dbReference type="Proteomes" id="UP000008204">
    <property type="component" value="Chromosome"/>
</dbReference>
<dbReference type="GO" id="GO:0030956">
    <property type="term" value="C:glutamyl-tRNA(Gln) amidotransferase complex"/>
    <property type="evidence" value="ECO:0007669"/>
    <property type="project" value="InterPro"/>
</dbReference>
<dbReference type="GO" id="GO:0005524">
    <property type="term" value="F:ATP binding"/>
    <property type="evidence" value="ECO:0007669"/>
    <property type="project" value="UniProtKB-KW"/>
</dbReference>
<dbReference type="GO" id="GO:0050567">
    <property type="term" value="F:glutaminyl-tRNA synthase (glutamine-hydrolyzing) activity"/>
    <property type="evidence" value="ECO:0007669"/>
    <property type="project" value="UniProtKB-UniRule"/>
</dbReference>
<dbReference type="GO" id="GO:0006412">
    <property type="term" value="P:translation"/>
    <property type="evidence" value="ECO:0007669"/>
    <property type="project" value="UniProtKB-UniRule"/>
</dbReference>
<dbReference type="Gene3D" id="3.90.1300.10">
    <property type="entry name" value="Amidase signature (AS) domain"/>
    <property type="match status" value="1"/>
</dbReference>
<dbReference type="HAMAP" id="MF_00120">
    <property type="entry name" value="GatA"/>
    <property type="match status" value="1"/>
</dbReference>
<dbReference type="InterPro" id="IPR000120">
    <property type="entry name" value="Amidase"/>
</dbReference>
<dbReference type="InterPro" id="IPR020556">
    <property type="entry name" value="Amidase_CS"/>
</dbReference>
<dbReference type="InterPro" id="IPR023631">
    <property type="entry name" value="Amidase_dom"/>
</dbReference>
<dbReference type="InterPro" id="IPR036928">
    <property type="entry name" value="AS_sf"/>
</dbReference>
<dbReference type="InterPro" id="IPR004412">
    <property type="entry name" value="GatA"/>
</dbReference>
<dbReference type="NCBIfam" id="TIGR00132">
    <property type="entry name" value="gatA"/>
    <property type="match status" value="1"/>
</dbReference>
<dbReference type="PANTHER" id="PTHR11895:SF151">
    <property type="entry name" value="GLUTAMYL-TRNA(GLN) AMIDOTRANSFERASE SUBUNIT A"/>
    <property type="match status" value="1"/>
</dbReference>
<dbReference type="PANTHER" id="PTHR11895">
    <property type="entry name" value="TRANSAMIDASE"/>
    <property type="match status" value="1"/>
</dbReference>
<dbReference type="Pfam" id="PF01425">
    <property type="entry name" value="Amidase"/>
    <property type="match status" value="1"/>
</dbReference>
<dbReference type="SUPFAM" id="SSF75304">
    <property type="entry name" value="Amidase signature (AS) enzymes"/>
    <property type="match status" value="1"/>
</dbReference>
<dbReference type="PROSITE" id="PS00571">
    <property type="entry name" value="AMIDASES"/>
    <property type="match status" value="1"/>
</dbReference>
<protein>
    <recommendedName>
        <fullName evidence="1">Glutamyl-tRNA(Gln) amidotransferase subunit A</fullName>
        <shortName evidence="1">Glu-ADT subunit A</shortName>
        <ecNumber evidence="1">6.3.5.7</ecNumber>
    </recommendedName>
</protein>
<gene>
    <name evidence="1" type="primary">gatA</name>
    <name type="ordered locus">PCC8801_3501</name>
</gene>
<feature type="chain" id="PRO_1000117608" description="Glutamyl-tRNA(Gln) amidotransferase subunit A">
    <location>
        <begin position="1"/>
        <end position="482"/>
    </location>
</feature>
<feature type="active site" description="Charge relay system" evidence="1">
    <location>
        <position position="75"/>
    </location>
</feature>
<feature type="active site" description="Charge relay system" evidence="1">
    <location>
        <position position="150"/>
    </location>
</feature>
<feature type="active site" description="Acyl-ester intermediate" evidence="1">
    <location>
        <position position="174"/>
    </location>
</feature>
<accession>B7K0I2</accession>
<comment type="function">
    <text evidence="1">Allows the formation of correctly charged Gln-tRNA(Gln) through the transamidation of misacylated Glu-tRNA(Gln) in organisms which lack glutaminyl-tRNA synthetase. The reaction takes place in the presence of glutamine and ATP through an activated gamma-phospho-Glu-tRNA(Gln).</text>
</comment>
<comment type="catalytic activity">
    <reaction evidence="1">
        <text>L-glutamyl-tRNA(Gln) + L-glutamine + ATP + H2O = L-glutaminyl-tRNA(Gln) + L-glutamate + ADP + phosphate + H(+)</text>
        <dbReference type="Rhea" id="RHEA:17521"/>
        <dbReference type="Rhea" id="RHEA-COMP:9681"/>
        <dbReference type="Rhea" id="RHEA-COMP:9684"/>
        <dbReference type="ChEBI" id="CHEBI:15377"/>
        <dbReference type="ChEBI" id="CHEBI:15378"/>
        <dbReference type="ChEBI" id="CHEBI:29985"/>
        <dbReference type="ChEBI" id="CHEBI:30616"/>
        <dbReference type="ChEBI" id="CHEBI:43474"/>
        <dbReference type="ChEBI" id="CHEBI:58359"/>
        <dbReference type="ChEBI" id="CHEBI:78520"/>
        <dbReference type="ChEBI" id="CHEBI:78521"/>
        <dbReference type="ChEBI" id="CHEBI:456216"/>
        <dbReference type="EC" id="6.3.5.7"/>
    </reaction>
</comment>
<comment type="subunit">
    <text evidence="1">Heterotrimer of A, B and C subunits.</text>
</comment>
<comment type="similarity">
    <text evidence="1">Belongs to the amidase family. GatA subfamily.</text>
</comment>
<organism>
    <name type="scientific">Rippkaea orientalis (strain PCC 8801 / RF-1)</name>
    <name type="common">Cyanothece sp. (strain PCC 8801)</name>
    <dbReference type="NCBI Taxonomy" id="41431"/>
    <lineage>
        <taxon>Bacteria</taxon>
        <taxon>Bacillati</taxon>
        <taxon>Cyanobacteriota</taxon>
        <taxon>Cyanophyceae</taxon>
        <taxon>Oscillatoriophycideae</taxon>
        <taxon>Chroococcales</taxon>
        <taxon>Aphanothecaceae</taxon>
        <taxon>Rippkaea</taxon>
        <taxon>Rippkaea orientalis</taxon>
    </lineage>
</organism>
<keyword id="KW-0067">ATP-binding</keyword>
<keyword id="KW-0436">Ligase</keyword>
<keyword id="KW-0547">Nucleotide-binding</keyword>
<keyword id="KW-0648">Protein biosynthesis</keyword>
<keyword id="KW-1185">Reference proteome</keyword>
<name>GATA_RIPO1</name>
<reference key="1">
    <citation type="journal article" date="2011" name="MBio">
        <title>Novel metabolic attributes of the genus Cyanothece, comprising a group of unicellular nitrogen-fixing Cyanobacteria.</title>
        <authorList>
            <person name="Bandyopadhyay A."/>
            <person name="Elvitigala T."/>
            <person name="Welsh E."/>
            <person name="Stockel J."/>
            <person name="Liberton M."/>
            <person name="Min H."/>
            <person name="Sherman L.A."/>
            <person name="Pakrasi H.B."/>
        </authorList>
    </citation>
    <scope>NUCLEOTIDE SEQUENCE [LARGE SCALE GENOMIC DNA]</scope>
    <source>
        <strain>PCC 8801 / RF-1</strain>
    </source>
</reference>
<proteinExistence type="inferred from homology"/>
<sequence>MASIRELHQQLINKERSAVEITTEALERIAAIEPQVKSFLCITADRALETAKAVDQKIAAKEEIGLLAGIPIGIKDNMSTKGIPTTCGSRILENFIPPYESTVTQKLQEIGAVMVGKTNLDEFAMGSSTENSGYQVTANPWDLERVPGGSSGGSAAAVAAEECVVALGSDTGGSIRQPASLCGVVGLKPTYGLVSRFGLVAYGSSLDQIGPFGRTVEDVAIVLGAIAGYDAKDSTSLKLPIPDYTTFLNPSLKGVKIGIIEETFGEGLDSIVAETVNKAIEQLQALGATIERISCPRFRYGLPAYYIIAPSEASANLARYDAVKYGIREEAATLLEMYNKTRAKGFGSEVKRRIMIGTYTLSAGYYDAYYLKAQKVRTLIKQDFDKAFESVDVLVCPTSPTTAFKAGEKTDDPLSMYLSDLMTIPVNLAGLPGMSIPCGFDQQGLPIGLQLVSNVLEEGKLFNVGYAYEQSTEWHKQKPPLK</sequence>